<feature type="chain" id="PRO_1000051257" description="Small ribosomal subunit protein uS9">
    <location>
        <begin position="1"/>
        <end position="130"/>
    </location>
</feature>
<feature type="region of interest" description="Disordered" evidence="2">
    <location>
        <begin position="109"/>
        <end position="130"/>
    </location>
</feature>
<feature type="compositionally biased region" description="Basic residues" evidence="2">
    <location>
        <begin position="111"/>
        <end position="130"/>
    </location>
</feature>
<organism>
    <name type="scientific">Mycoplasma mobile (strain ATCC 43663 / 163K / NCTC 11711)</name>
    <name type="common">Mesomycoplasma mobile</name>
    <dbReference type="NCBI Taxonomy" id="267748"/>
    <lineage>
        <taxon>Bacteria</taxon>
        <taxon>Bacillati</taxon>
        <taxon>Mycoplasmatota</taxon>
        <taxon>Mycoplasmoidales</taxon>
        <taxon>Metamycoplasmataceae</taxon>
        <taxon>Mesomycoplasma</taxon>
    </lineage>
</organism>
<protein>
    <recommendedName>
        <fullName evidence="1">Small ribosomal subunit protein uS9</fullName>
    </recommendedName>
    <alternativeName>
        <fullName evidence="3">30S ribosomal protein S9</fullName>
    </alternativeName>
</protein>
<proteinExistence type="inferred from homology"/>
<reference key="1">
    <citation type="journal article" date="2004" name="Genome Res.">
        <title>The complete genome and proteome of Mycoplasma mobile.</title>
        <authorList>
            <person name="Jaffe J.D."/>
            <person name="Stange-Thomann N."/>
            <person name="Smith C."/>
            <person name="DeCaprio D."/>
            <person name="Fisher S."/>
            <person name="Butler J."/>
            <person name="Calvo S."/>
            <person name="Elkins T."/>
            <person name="FitzGerald M.G."/>
            <person name="Hafez N."/>
            <person name="Kodira C.D."/>
            <person name="Major J."/>
            <person name="Wang S."/>
            <person name="Wilkinson J."/>
            <person name="Nicol R."/>
            <person name="Nusbaum C."/>
            <person name="Birren B."/>
            <person name="Berg H.C."/>
            <person name="Church G.M."/>
        </authorList>
    </citation>
    <scope>NUCLEOTIDE SEQUENCE [LARGE SCALE GENOMIC DNA]</scope>
    <source>
        <strain>ATCC 43663 / NCTC 11711 / 163 K</strain>
    </source>
</reference>
<accession>Q6KI60</accession>
<gene>
    <name evidence="1" type="primary">rpsI</name>
    <name type="ordered locus">MMOB2300</name>
</gene>
<sequence>MSDIMYRGLGRRKSSSARVILRPGKGEFLINKRVARDYLMSDILLKDALQPIVISDQKEKFDITVNVRGGGLSGQAGAIRLGIARALLEVSVDFRKNLKTAGMLTRDARVKERKKPGLKKARKARQFSKR</sequence>
<keyword id="KW-1185">Reference proteome</keyword>
<keyword id="KW-0687">Ribonucleoprotein</keyword>
<keyword id="KW-0689">Ribosomal protein</keyword>
<comment type="similarity">
    <text evidence="1">Belongs to the universal ribosomal protein uS9 family.</text>
</comment>
<dbReference type="EMBL" id="AE017308">
    <property type="protein sequence ID" value="AAT27716.1"/>
    <property type="molecule type" value="Genomic_DNA"/>
</dbReference>
<dbReference type="RefSeq" id="WP_011264750.1">
    <property type="nucleotide sequence ID" value="NC_006908.1"/>
</dbReference>
<dbReference type="SMR" id="Q6KI60"/>
<dbReference type="STRING" id="267748.MMOB2300"/>
<dbReference type="KEGG" id="mmo:MMOB2300"/>
<dbReference type="eggNOG" id="COG0103">
    <property type="taxonomic scope" value="Bacteria"/>
</dbReference>
<dbReference type="HOGENOM" id="CLU_046483_2_1_14"/>
<dbReference type="OrthoDB" id="9803965at2"/>
<dbReference type="Proteomes" id="UP000009072">
    <property type="component" value="Chromosome"/>
</dbReference>
<dbReference type="GO" id="GO:0022627">
    <property type="term" value="C:cytosolic small ribosomal subunit"/>
    <property type="evidence" value="ECO:0007669"/>
    <property type="project" value="TreeGrafter"/>
</dbReference>
<dbReference type="GO" id="GO:0003723">
    <property type="term" value="F:RNA binding"/>
    <property type="evidence" value="ECO:0007669"/>
    <property type="project" value="TreeGrafter"/>
</dbReference>
<dbReference type="GO" id="GO:0003735">
    <property type="term" value="F:structural constituent of ribosome"/>
    <property type="evidence" value="ECO:0007669"/>
    <property type="project" value="InterPro"/>
</dbReference>
<dbReference type="GO" id="GO:0006412">
    <property type="term" value="P:translation"/>
    <property type="evidence" value="ECO:0007669"/>
    <property type="project" value="UniProtKB-UniRule"/>
</dbReference>
<dbReference type="FunFam" id="3.30.230.10:FF:000001">
    <property type="entry name" value="30S ribosomal protein S9"/>
    <property type="match status" value="1"/>
</dbReference>
<dbReference type="Gene3D" id="3.30.230.10">
    <property type="match status" value="1"/>
</dbReference>
<dbReference type="HAMAP" id="MF_00532_B">
    <property type="entry name" value="Ribosomal_uS9_B"/>
    <property type="match status" value="1"/>
</dbReference>
<dbReference type="InterPro" id="IPR020568">
    <property type="entry name" value="Ribosomal_Su5_D2-typ_SF"/>
</dbReference>
<dbReference type="InterPro" id="IPR000754">
    <property type="entry name" value="Ribosomal_uS9"/>
</dbReference>
<dbReference type="InterPro" id="IPR023035">
    <property type="entry name" value="Ribosomal_uS9_bac/plastid"/>
</dbReference>
<dbReference type="InterPro" id="IPR020574">
    <property type="entry name" value="Ribosomal_uS9_CS"/>
</dbReference>
<dbReference type="InterPro" id="IPR014721">
    <property type="entry name" value="Ribsml_uS5_D2-typ_fold_subgr"/>
</dbReference>
<dbReference type="NCBIfam" id="NF001099">
    <property type="entry name" value="PRK00132.1"/>
    <property type="match status" value="1"/>
</dbReference>
<dbReference type="PANTHER" id="PTHR21569">
    <property type="entry name" value="RIBOSOMAL PROTEIN S9"/>
    <property type="match status" value="1"/>
</dbReference>
<dbReference type="PANTHER" id="PTHR21569:SF1">
    <property type="entry name" value="SMALL RIBOSOMAL SUBUNIT PROTEIN US9M"/>
    <property type="match status" value="1"/>
</dbReference>
<dbReference type="Pfam" id="PF00380">
    <property type="entry name" value="Ribosomal_S9"/>
    <property type="match status" value="1"/>
</dbReference>
<dbReference type="SUPFAM" id="SSF54211">
    <property type="entry name" value="Ribosomal protein S5 domain 2-like"/>
    <property type="match status" value="1"/>
</dbReference>
<dbReference type="PROSITE" id="PS00360">
    <property type="entry name" value="RIBOSOMAL_S9"/>
    <property type="match status" value="1"/>
</dbReference>
<name>RS9_MYCM1</name>
<evidence type="ECO:0000255" key="1">
    <source>
        <dbReference type="HAMAP-Rule" id="MF_00532"/>
    </source>
</evidence>
<evidence type="ECO:0000256" key="2">
    <source>
        <dbReference type="SAM" id="MobiDB-lite"/>
    </source>
</evidence>
<evidence type="ECO:0000305" key="3"/>